<reference key="1">
    <citation type="journal article" date="1986" name="Mol. Biol. Evol.">
        <title>Nucleotide sequence analysis of the lemur beta-globin gene family: evidence for major rate fluctuations in globin polypeptide evolution.</title>
        <authorList>
            <person name="Harris S."/>
            <person name="Thackeray J.R."/>
            <person name="Jeffreys A.J."/>
            <person name="Weiss M.L."/>
        </authorList>
    </citation>
    <scope>NUCLEOTIDE SEQUENCE [GENOMIC DNA]</scope>
</reference>
<gene>
    <name type="primary">HBG</name>
</gene>
<dbReference type="EMBL" id="M15758">
    <property type="protein sequence ID" value="AAA36825.1"/>
    <property type="molecule type" value="Genomic_DNA"/>
</dbReference>
<dbReference type="PIR" id="I77304">
    <property type="entry name" value="I77304"/>
</dbReference>
<dbReference type="SMR" id="P08224"/>
<dbReference type="OrthoDB" id="9886081at2759"/>
<dbReference type="GO" id="GO:0072562">
    <property type="term" value="C:blood microparticle"/>
    <property type="evidence" value="ECO:0007669"/>
    <property type="project" value="TreeGrafter"/>
</dbReference>
<dbReference type="GO" id="GO:0031838">
    <property type="term" value="C:haptoglobin-hemoglobin complex"/>
    <property type="evidence" value="ECO:0007669"/>
    <property type="project" value="TreeGrafter"/>
</dbReference>
<dbReference type="GO" id="GO:0005833">
    <property type="term" value="C:hemoglobin complex"/>
    <property type="evidence" value="ECO:0007669"/>
    <property type="project" value="InterPro"/>
</dbReference>
<dbReference type="GO" id="GO:0031720">
    <property type="term" value="F:haptoglobin binding"/>
    <property type="evidence" value="ECO:0007669"/>
    <property type="project" value="TreeGrafter"/>
</dbReference>
<dbReference type="GO" id="GO:0020037">
    <property type="term" value="F:heme binding"/>
    <property type="evidence" value="ECO:0007669"/>
    <property type="project" value="InterPro"/>
</dbReference>
<dbReference type="GO" id="GO:0031721">
    <property type="term" value="F:hemoglobin alpha binding"/>
    <property type="evidence" value="ECO:0007669"/>
    <property type="project" value="TreeGrafter"/>
</dbReference>
<dbReference type="GO" id="GO:0046872">
    <property type="term" value="F:metal ion binding"/>
    <property type="evidence" value="ECO:0007669"/>
    <property type="project" value="UniProtKB-KW"/>
</dbReference>
<dbReference type="GO" id="GO:0043177">
    <property type="term" value="F:organic acid binding"/>
    <property type="evidence" value="ECO:0007669"/>
    <property type="project" value="TreeGrafter"/>
</dbReference>
<dbReference type="GO" id="GO:0019825">
    <property type="term" value="F:oxygen binding"/>
    <property type="evidence" value="ECO:0007669"/>
    <property type="project" value="InterPro"/>
</dbReference>
<dbReference type="GO" id="GO:0005344">
    <property type="term" value="F:oxygen carrier activity"/>
    <property type="evidence" value="ECO:0007669"/>
    <property type="project" value="UniProtKB-KW"/>
</dbReference>
<dbReference type="GO" id="GO:0004601">
    <property type="term" value="F:peroxidase activity"/>
    <property type="evidence" value="ECO:0007669"/>
    <property type="project" value="TreeGrafter"/>
</dbReference>
<dbReference type="GO" id="GO:0042744">
    <property type="term" value="P:hydrogen peroxide catabolic process"/>
    <property type="evidence" value="ECO:0007669"/>
    <property type="project" value="TreeGrafter"/>
</dbReference>
<dbReference type="CDD" id="cd08925">
    <property type="entry name" value="Hb-beta-like"/>
    <property type="match status" value="1"/>
</dbReference>
<dbReference type="FunFam" id="1.10.490.10:FF:000001">
    <property type="entry name" value="Hemoglobin subunit beta"/>
    <property type="match status" value="1"/>
</dbReference>
<dbReference type="Gene3D" id="1.10.490.10">
    <property type="entry name" value="Globins"/>
    <property type="match status" value="1"/>
</dbReference>
<dbReference type="InterPro" id="IPR000971">
    <property type="entry name" value="Globin"/>
</dbReference>
<dbReference type="InterPro" id="IPR009050">
    <property type="entry name" value="Globin-like_sf"/>
</dbReference>
<dbReference type="InterPro" id="IPR012292">
    <property type="entry name" value="Globin/Proto"/>
</dbReference>
<dbReference type="InterPro" id="IPR002337">
    <property type="entry name" value="Hemoglobin_b"/>
</dbReference>
<dbReference type="InterPro" id="IPR050056">
    <property type="entry name" value="Hemoglobin_oxygen_transport"/>
</dbReference>
<dbReference type="PANTHER" id="PTHR11442">
    <property type="entry name" value="HEMOGLOBIN FAMILY MEMBER"/>
    <property type="match status" value="1"/>
</dbReference>
<dbReference type="PANTHER" id="PTHR11442:SF52">
    <property type="entry name" value="HEMOGLOBIN SUBUNIT GAMMA-1"/>
    <property type="match status" value="1"/>
</dbReference>
<dbReference type="Pfam" id="PF00042">
    <property type="entry name" value="Globin"/>
    <property type="match status" value="1"/>
</dbReference>
<dbReference type="PRINTS" id="PR00814">
    <property type="entry name" value="BETAHAEM"/>
</dbReference>
<dbReference type="SUPFAM" id="SSF46458">
    <property type="entry name" value="Globin-like"/>
    <property type="match status" value="1"/>
</dbReference>
<dbReference type="PROSITE" id="PS01033">
    <property type="entry name" value="GLOBIN"/>
    <property type="match status" value="1"/>
</dbReference>
<comment type="function">
    <text>Gamma chains make up the fetal hemoglobin F, in combination with alpha chains.</text>
</comment>
<comment type="subunit">
    <text>Heterotetramer of two alpha chains and two gamma chains in fetal hemoglobin (Hb F).</text>
</comment>
<comment type="tissue specificity">
    <text>Red blood cells.</text>
</comment>
<comment type="similarity">
    <text evidence="1">Belongs to the globin family.</text>
</comment>
<accession>P08224</accession>
<feature type="chain" id="PRO_0000053246" description="Hemoglobin subunit gamma">
    <location>
        <begin position="1"/>
        <end position="147"/>
    </location>
</feature>
<feature type="domain" description="Globin" evidence="1">
    <location>
        <begin position="3"/>
        <end position="147"/>
    </location>
</feature>
<feature type="binding site" description="distal binding residue" evidence="1">
    <location>
        <position position="64"/>
    </location>
    <ligand>
        <name>heme b</name>
        <dbReference type="ChEBI" id="CHEBI:60344"/>
    </ligand>
    <ligandPart>
        <name>Fe</name>
        <dbReference type="ChEBI" id="CHEBI:18248"/>
    </ligandPart>
</feature>
<feature type="binding site" description="proximal binding residue" evidence="1">
    <location>
        <position position="93"/>
    </location>
    <ligand>
        <name>heme b</name>
        <dbReference type="ChEBI" id="CHEBI:60344"/>
    </ligand>
    <ligandPart>
        <name>Fe</name>
        <dbReference type="ChEBI" id="CHEBI:18248"/>
    </ligandPart>
</feature>
<keyword id="KW-0349">Heme</keyword>
<keyword id="KW-0408">Iron</keyword>
<keyword id="KW-0479">Metal-binding</keyword>
<keyword id="KW-0561">Oxygen transport</keyword>
<keyword id="KW-0813">Transport</keyword>
<organism>
    <name type="scientific">Cheirogaleus medius</name>
    <name type="common">Fat-tailed dwarf lemur</name>
    <dbReference type="NCBI Taxonomy" id="9460"/>
    <lineage>
        <taxon>Eukaryota</taxon>
        <taxon>Metazoa</taxon>
        <taxon>Chordata</taxon>
        <taxon>Craniata</taxon>
        <taxon>Vertebrata</taxon>
        <taxon>Euteleostomi</taxon>
        <taxon>Mammalia</taxon>
        <taxon>Eutheria</taxon>
        <taxon>Euarchontoglires</taxon>
        <taxon>Primates</taxon>
        <taxon>Strepsirrhini</taxon>
        <taxon>Lemuriformes</taxon>
        <taxon>Cheirogaleidae</taxon>
        <taxon>Cheirogaleus</taxon>
    </lineage>
</organism>
<name>HBG_CHEME</name>
<sequence>MVHFTVEEKAVITSLWGKVNVEEAGGEALGRLLVVYPWTQRFFDNFGNLSSASAIMGNPKVKAHGKKVLTSLGEAIKNMDDLKGTFAHLSELHCDRLHVDPENFKLLGNELVIVLAKHFGKEFTPQVQAAWQKMVAGVAIALAHKYH</sequence>
<protein>
    <recommendedName>
        <fullName>Hemoglobin subunit gamma</fullName>
    </recommendedName>
    <alternativeName>
        <fullName>Gamma-globin</fullName>
    </alternativeName>
    <alternativeName>
        <fullName>Hemoglobin gamma chain</fullName>
    </alternativeName>
</protein>
<evidence type="ECO:0000255" key="1">
    <source>
        <dbReference type="PROSITE-ProRule" id="PRU00238"/>
    </source>
</evidence>
<proteinExistence type="evidence at transcript level"/>